<protein>
    <recommendedName>
        <fullName>RNA-binding protein VTS1</fullName>
    </recommendedName>
</protein>
<comment type="function">
    <text evidence="2">RNA-binding protein involved in post-transcriptional regulation through transcript degradation.</text>
</comment>
<comment type="subunit">
    <text evidence="2">Monomer. Binds to RNA.</text>
</comment>
<comment type="subcellular location">
    <subcellularLocation>
        <location evidence="2">Cytoplasm</location>
        <location evidence="2">Cytosol</location>
    </subcellularLocation>
    <subcellularLocation>
        <location evidence="1">Cytoplasm</location>
        <location evidence="1">P-body</location>
    </subcellularLocation>
</comment>
<comment type="similarity">
    <text evidence="5">Belongs to the VTS1 family.</text>
</comment>
<dbReference type="EMBL" id="CR382127">
    <property type="protein sequence ID" value="CAG83787.1"/>
    <property type="molecule type" value="Genomic_DNA"/>
</dbReference>
<dbReference type="RefSeq" id="XP_499861.1">
    <property type="nucleotide sequence ID" value="XM_499861.1"/>
</dbReference>
<dbReference type="SMR" id="Q6CHK0"/>
<dbReference type="STRING" id="284591.Q6CHK0"/>
<dbReference type="EnsemblFungi" id="CAG83787">
    <property type="protein sequence ID" value="CAG83787"/>
    <property type="gene ID" value="YALI0_A08063g"/>
</dbReference>
<dbReference type="KEGG" id="yli:2906106"/>
<dbReference type="VEuPathDB" id="FungiDB:YALI0_A08063g"/>
<dbReference type="HOGENOM" id="CLU_627317_0_0_1"/>
<dbReference type="InParanoid" id="Q6CHK0"/>
<dbReference type="OMA" id="KREQATH"/>
<dbReference type="OrthoDB" id="123230at4891"/>
<dbReference type="Proteomes" id="UP000001300">
    <property type="component" value="Chromosome A"/>
</dbReference>
<dbReference type="GO" id="GO:0005829">
    <property type="term" value="C:cytosol"/>
    <property type="evidence" value="ECO:0007669"/>
    <property type="project" value="UniProtKB-SubCell"/>
</dbReference>
<dbReference type="GO" id="GO:0000932">
    <property type="term" value="C:P-body"/>
    <property type="evidence" value="ECO:0000318"/>
    <property type="project" value="GO_Central"/>
</dbReference>
<dbReference type="GO" id="GO:0003729">
    <property type="term" value="F:mRNA binding"/>
    <property type="evidence" value="ECO:0000318"/>
    <property type="project" value="GO_Central"/>
</dbReference>
<dbReference type="GO" id="GO:0000166">
    <property type="term" value="F:nucleotide binding"/>
    <property type="evidence" value="ECO:0007669"/>
    <property type="project" value="UniProtKB-KW"/>
</dbReference>
<dbReference type="GO" id="GO:0000289">
    <property type="term" value="P:nuclear-transcribed mRNA poly(A) tail shortening"/>
    <property type="evidence" value="ECO:0000318"/>
    <property type="project" value="GO_Central"/>
</dbReference>
<dbReference type="GO" id="GO:0015031">
    <property type="term" value="P:protein transport"/>
    <property type="evidence" value="ECO:0007669"/>
    <property type="project" value="UniProtKB-KW"/>
</dbReference>
<dbReference type="CDD" id="cd09556">
    <property type="entry name" value="SAM_VTS1_fungal"/>
    <property type="match status" value="1"/>
</dbReference>
<dbReference type="FunFam" id="1.10.150.50:FF:000033">
    <property type="entry name" value="Protein vts1, variant"/>
    <property type="match status" value="1"/>
</dbReference>
<dbReference type="Gene3D" id="1.10.150.50">
    <property type="entry name" value="Transcription Factor, Ets-1"/>
    <property type="match status" value="1"/>
</dbReference>
<dbReference type="InterPro" id="IPR001660">
    <property type="entry name" value="SAM"/>
</dbReference>
<dbReference type="InterPro" id="IPR013761">
    <property type="entry name" value="SAM/pointed_sf"/>
</dbReference>
<dbReference type="InterPro" id="IPR050897">
    <property type="entry name" value="SMAUG/VTS1_RNA-bind"/>
</dbReference>
<dbReference type="InterPro" id="IPR037635">
    <property type="entry name" value="VTS1_SAM"/>
</dbReference>
<dbReference type="PANTHER" id="PTHR12515:SF5">
    <property type="entry name" value="PROTEIN SMAUG"/>
    <property type="match status" value="1"/>
</dbReference>
<dbReference type="PANTHER" id="PTHR12515">
    <property type="entry name" value="STERILE ALPHA MOTIF DOMAIN CONTAINING PROTEIN 4-RELATED"/>
    <property type="match status" value="1"/>
</dbReference>
<dbReference type="Pfam" id="PF07647">
    <property type="entry name" value="SAM_2"/>
    <property type="match status" value="1"/>
</dbReference>
<dbReference type="Pfam" id="PF25479">
    <property type="entry name" value="Vts1"/>
    <property type="match status" value="1"/>
</dbReference>
<dbReference type="SMART" id="SM00454">
    <property type="entry name" value="SAM"/>
    <property type="match status" value="1"/>
</dbReference>
<dbReference type="SUPFAM" id="SSF47769">
    <property type="entry name" value="SAM/Pointed domain"/>
    <property type="match status" value="1"/>
</dbReference>
<dbReference type="PROSITE" id="PS50105">
    <property type="entry name" value="SAM_DOMAIN"/>
    <property type="match status" value="1"/>
</dbReference>
<accession>Q6CHK0</accession>
<name>VTS1_YARLI</name>
<reference key="1">
    <citation type="journal article" date="2004" name="Nature">
        <title>Genome evolution in yeasts.</title>
        <authorList>
            <person name="Dujon B."/>
            <person name="Sherman D."/>
            <person name="Fischer G."/>
            <person name="Durrens P."/>
            <person name="Casaregola S."/>
            <person name="Lafontaine I."/>
            <person name="de Montigny J."/>
            <person name="Marck C."/>
            <person name="Neuveglise C."/>
            <person name="Talla E."/>
            <person name="Goffard N."/>
            <person name="Frangeul L."/>
            <person name="Aigle M."/>
            <person name="Anthouard V."/>
            <person name="Babour A."/>
            <person name="Barbe V."/>
            <person name="Barnay S."/>
            <person name="Blanchin S."/>
            <person name="Beckerich J.-M."/>
            <person name="Beyne E."/>
            <person name="Bleykasten C."/>
            <person name="Boisrame A."/>
            <person name="Boyer J."/>
            <person name="Cattolico L."/>
            <person name="Confanioleri F."/>
            <person name="de Daruvar A."/>
            <person name="Despons L."/>
            <person name="Fabre E."/>
            <person name="Fairhead C."/>
            <person name="Ferry-Dumazet H."/>
            <person name="Groppi A."/>
            <person name="Hantraye F."/>
            <person name="Hennequin C."/>
            <person name="Jauniaux N."/>
            <person name="Joyet P."/>
            <person name="Kachouri R."/>
            <person name="Kerrest A."/>
            <person name="Koszul R."/>
            <person name="Lemaire M."/>
            <person name="Lesur I."/>
            <person name="Ma L."/>
            <person name="Muller H."/>
            <person name="Nicaud J.-M."/>
            <person name="Nikolski M."/>
            <person name="Oztas S."/>
            <person name="Ozier-Kalogeropoulos O."/>
            <person name="Pellenz S."/>
            <person name="Potier S."/>
            <person name="Richard G.-F."/>
            <person name="Straub M.-L."/>
            <person name="Suleau A."/>
            <person name="Swennen D."/>
            <person name="Tekaia F."/>
            <person name="Wesolowski-Louvel M."/>
            <person name="Westhof E."/>
            <person name="Wirth B."/>
            <person name="Zeniou-Meyer M."/>
            <person name="Zivanovic Y."/>
            <person name="Bolotin-Fukuhara M."/>
            <person name="Thierry A."/>
            <person name="Bouchier C."/>
            <person name="Caudron B."/>
            <person name="Scarpelli C."/>
            <person name="Gaillardin C."/>
            <person name="Weissenbach J."/>
            <person name="Wincker P."/>
            <person name="Souciet J.-L."/>
        </authorList>
    </citation>
    <scope>NUCLEOTIDE SEQUENCE [LARGE SCALE GENOMIC DNA]</scope>
    <source>
        <strain>CLIB 122 / E 150</strain>
    </source>
</reference>
<proteinExistence type="inferred from homology"/>
<evidence type="ECO:0000250" key="1">
    <source>
        <dbReference type="UniProtKB" id="J9VVN9"/>
    </source>
</evidence>
<evidence type="ECO:0000250" key="2">
    <source>
        <dbReference type="UniProtKB" id="Q08831"/>
    </source>
</evidence>
<evidence type="ECO:0000255" key="3">
    <source>
        <dbReference type="PROSITE-ProRule" id="PRU00184"/>
    </source>
</evidence>
<evidence type="ECO:0000256" key="4">
    <source>
        <dbReference type="SAM" id="MobiDB-lite"/>
    </source>
</evidence>
<evidence type="ECO:0000305" key="5"/>
<gene>
    <name type="primary">VTS1</name>
    <name type="ordered locus">YALI0A08063g</name>
</gene>
<feature type="chain" id="PRO_0000081457" description="RNA-binding protein VTS1">
    <location>
        <begin position="1"/>
        <end position="437"/>
    </location>
</feature>
<feature type="domain" description="SAM" evidence="3">
    <location>
        <begin position="367"/>
        <end position="428"/>
    </location>
</feature>
<feature type="region of interest" description="Disordered" evidence="4">
    <location>
        <begin position="1"/>
        <end position="40"/>
    </location>
</feature>
<feature type="region of interest" description="Disordered" evidence="4">
    <location>
        <begin position="175"/>
        <end position="262"/>
    </location>
</feature>
<feature type="region of interest" description="Disordered" evidence="4">
    <location>
        <begin position="295"/>
        <end position="362"/>
    </location>
</feature>
<feature type="compositionally biased region" description="Low complexity" evidence="4">
    <location>
        <begin position="185"/>
        <end position="207"/>
    </location>
</feature>
<feature type="compositionally biased region" description="Gly residues" evidence="4">
    <location>
        <begin position="208"/>
        <end position="217"/>
    </location>
</feature>
<feature type="compositionally biased region" description="Polar residues" evidence="4">
    <location>
        <begin position="243"/>
        <end position="259"/>
    </location>
</feature>
<feature type="compositionally biased region" description="Low complexity" evidence="4">
    <location>
        <begin position="344"/>
        <end position="361"/>
    </location>
</feature>
<sequence>MNIPRFMPGHVLHTSEDIPQSESPLAGRRTRPVSEAFSSSYRHSDLGGYPPYGLGGSATAGLGSLSAGMGNLNLGGTTPGLQHLGGGLANTATMDSEKWLQDLELYNAILEEMATVSLDKDFKDELSSIEQWFGVLSDGERTAALYALLQQTNPVQIRFFITVLQKFGNMDFDGSPIGNSFENGAPQQQQQTSAQPSPMGQGAMGQAMTGGLGGLGGLHPHQTTHSNLNPNAHNPIYAPVGTFPSTPSHKHTSSLSTEPIGSRRSMIATPEHDLNAQIANTTAMKLAALSTVSNRASLDDRSKRSSFHQHTNSQESTPTKPGTPGGSPAPGAHSLATPMKGHHQTSSSSSITQLSGASSASPATDIKLLRDVSAWLRALRLHKYTECFKDMEWQDIVQLDDAQLEEKGVNALGARRKMLKVFEQVRDAQKDGTLGGV</sequence>
<organism>
    <name type="scientific">Yarrowia lipolytica (strain CLIB 122 / E 150)</name>
    <name type="common">Yeast</name>
    <name type="synonym">Candida lipolytica</name>
    <dbReference type="NCBI Taxonomy" id="284591"/>
    <lineage>
        <taxon>Eukaryota</taxon>
        <taxon>Fungi</taxon>
        <taxon>Dikarya</taxon>
        <taxon>Ascomycota</taxon>
        <taxon>Saccharomycotina</taxon>
        <taxon>Dipodascomycetes</taxon>
        <taxon>Dipodascales</taxon>
        <taxon>Dipodascales incertae sedis</taxon>
        <taxon>Yarrowia</taxon>
    </lineage>
</organism>
<keyword id="KW-0963">Cytoplasm</keyword>
<keyword id="KW-0547">Nucleotide-binding</keyword>
<keyword id="KW-0653">Protein transport</keyword>
<keyword id="KW-1185">Reference proteome</keyword>
<keyword id="KW-0694">RNA-binding</keyword>
<keyword id="KW-0813">Transport</keyword>